<keyword id="KW-1185">Reference proteome</keyword>
<keyword id="KW-0732">Signal</keyword>
<evidence type="ECO:0000255" key="1"/>
<evidence type="ECO:0000269" key="2">
    <source>
    </source>
</evidence>
<evidence type="ECO:0000269" key="3">
    <source>
    </source>
</evidence>
<evidence type="ECO:0000269" key="4">
    <source>
    </source>
</evidence>
<evidence type="ECO:0000269" key="5">
    <source>
    </source>
</evidence>
<evidence type="ECO:0000269" key="6">
    <source>
    </source>
</evidence>
<evidence type="ECO:0000303" key="7">
    <source>
    </source>
</evidence>
<evidence type="ECO:0000305" key="8"/>
<gene>
    <name evidence="7" type="primary">ssl5</name>
    <name type="ordered locus">SAOUHSC_00390</name>
</gene>
<sequence length="234" mass="27170">MKMTAIAKASLALGILATGTITSLHQTVNASEHKAKYENVTKDIFDLRDYYSGASKELKNVTGYRYSKGGKHYLIFDKNRKFTRVQIFGKDIERFKARKNPGLDIFVVKEAENRNGTVFSYGGVTKKNQDAYYDYINAPRFQIKRDEGDGIATYGRVHYIYKEEISLKELDFKLRQYLIQNFDLYKKFPKDSKIKVIMKDGGYYTFELNKKLQTNRMSDVIDGRNIEKIEANIR</sequence>
<organism>
    <name type="scientific">Staphylococcus aureus (strain NCTC 8325 / PS 47)</name>
    <dbReference type="NCBI Taxonomy" id="93061"/>
    <lineage>
        <taxon>Bacteria</taxon>
        <taxon>Bacillati</taxon>
        <taxon>Bacillota</taxon>
        <taxon>Bacilli</taxon>
        <taxon>Bacillales</taxon>
        <taxon>Staphylococcaceae</taxon>
        <taxon>Staphylococcus</taxon>
    </lineage>
</organism>
<name>SSL5_STAA8</name>
<dbReference type="EMBL" id="CP000253">
    <property type="protein sequence ID" value="ABD29553.1"/>
    <property type="molecule type" value="Genomic_DNA"/>
</dbReference>
<dbReference type="RefSeq" id="WP_000784244.1">
    <property type="nucleotide sequence ID" value="NZ_LS483365.1"/>
</dbReference>
<dbReference type="RefSeq" id="YP_498976.1">
    <property type="nucleotide sequence ID" value="NC_007795.1"/>
</dbReference>
<dbReference type="SMR" id="Q2G1S6"/>
<dbReference type="STRING" id="93061.SAOUHSC_00390"/>
<dbReference type="PaxDb" id="1280-SAXN108_0481"/>
<dbReference type="GeneID" id="3919125"/>
<dbReference type="KEGG" id="sao:SAOUHSC_00390"/>
<dbReference type="PATRIC" id="fig|93061.5.peg.358"/>
<dbReference type="eggNOG" id="ENOG503054K">
    <property type="taxonomic scope" value="Bacteria"/>
</dbReference>
<dbReference type="HOGENOM" id="CLU_054950_1_0_9"/>
<dbReference type="OrthoDB" id="2413502at2"/>
<dbReference type="Proteomes" id="UP000008816">
    <property type="component" value="Chromosome"/>
</dbReference>
<dbReference type="GO" id="GO:0005576">
    <property type="term" value="C:extracellular region"/>
    <property type="evidence" value="ECO:0007669"/>
    <property type="project" value="InterPro"/>
</dbReference>
<dbReference type="Gene3D" id="2.40.50.110">
    <property type="match status" value="1"/>
</dbReference>
<dbReference type="Gene3D" id="3.10.20.120">
    <property type="match status" value="1"/>
</dbReference>
<dbReference type="InterPro" id="IPR008992">
    <property type="entry name" value="Enterotoxin"/>
</dbReference>
<dbReference type="InterPro" id="IPR015282">
    <property type="entry name" value="SSL_OB"/>
</dbReference>
<dbReference type="InterPro" id="IPR006126">
    <property type="entry name" value="Staph/Strept_toxin_CS"/>
</dbReference>
<dbReference type="InterPro" id="IPR008375">
    <property type="entry name" value="Staph_exotoxin"/>
</dbReference>
<dbReference type="InterPro" id="IPR016091">
    <property type="entry name" value="SuperAg_toxin_C"/>
</dbReference>
<dbReference type="InterPro" id="IPR013307">
    <property type="entry name" value="Superantigen_bac"/>
</dbReference>
<dbReference type="InterPro" id="IPR006123">
    <property type="entry name" value="Toxin_b-grasp_Staph/Strep"/>
</dbReference>
<dbReference type="NCBIfam" id="NF009593">
    <property type="entry name" value="PRK13035.1"/>
    <property type="match status" value="1"/>
</dbReference>
<dbReference type="Pfam" id="PF09199">
    <property type="entry name" value="SSL_OB"/>
    <property type="match status" value="1"/>
</dbReference>
<dbReference type="Pfam" id="PF02876">
    <property type="entry name" value="Stap_Strp_tox_C"/>
    <property type="match status" value="1"/>
</dbReference>
<dbReference type="PRINTS" id="PR01898">
    <property type="entry name" value="SAGSUPRFAMLY"/>
</dbReference>
<dbReference type="PRINTS" id="PR01800">
    <property type="entry name" value="STAPHEXOTOXN"/>
</dbReference>
<dbReference type="PRINTS" id="PR01501">
    <property type="entry name" value="TOXICSSTOXIN"/>
</dbReference>
<dbReference type="SUPFAM" id="SSF50203">
    <property type="entry name" value="Bacterial enterotoxins"/>
    <property type="match status" value="1"/>
</dbReference>
<dbReference type="SUPFAM" id="SSF54334">
    <property type="entry name" value="Superantigen toxins, C-terminal domain"/>
    <property type="match status" value="1"/>
</dbReference>
<dbReference type="PROSITE" id="PS00278">
    <property type="entry name" value="STAPH_STREP_TOXIN_2"/>
    <property type="match status" value="1"/>
</dbReference>
<proteinExistence type="evidence at protein level"/>
<accession>Q2G1S6</accession>
<feature type="signal peptide" evidence="1">
    <location>
        <begin position="1"/>
        <end position="30"/>
    </location>
</feature>
<feature type="chain" id="PRO_5004207838" description="Staphylococcal superantigen-like 5" evidence="1">
    <location>
        <begin position="31"/>
        <end position="234"/>
    </location>
</feature>
<feature type="mutagenesis site" description="Complete loss of interaction with GP1BA." evidence="4">
    <original>T</original>
    <variation>P</variation>
    <location>
        <position position="205"/>
    </location>
</feature>
<protein>
    <recommendedName>
        <fullName evidence="7">Staphylococcal superantigen-like 5</fullName>
    </recommendedName>
</protein>
<reference key="1">
    <citation type="book" date="2006" name="Gram positive pathogens, 2nd edition">
        <title>The Staphylococcus aureus NCTC 8325 genome.</title>
        <editorList>
            <person name="Fischetti V."/>
            <person name="Novick R."/>
            <person name="Ferretti J."/>
            <person name="Portnoy D."/>
            <person name="Rood J."/>
        </editorList>
        <authorList>
            <person name="Gillaspy A.F."/>
            <person name="Worrell V."/>
            <person name="Orvis J."/>
            <person name="Roe B.A."/>
            <person name="Dyer D.W."/>
            <person name="Iandolo J.J."/>
        </authorList>
    </citation>
    <scope>NUCLEOTIDE SEQUENCE [LARGE SCALE GENOMIC DNA]</scope>
    <source>
        <strain>NCTC 8325 / PS 47</strain>
    </source>
</reference>
<reference key="2">
    <citation type="journal article" date="2007" name="Blood">
        <title>Staphylococcal superantigen-like 5 binds PSGL-1 and inhibits P-selectin-mediated neutrophil rolling.</title>
        <authorList>
            <person name="Bestebroer J."/>
            <person name="Poppelier M.J."/>
            <person name="Ulfman L.H."/>
            <person name="Lenting P.J."/>
            <person name="Denis C.V."/>
            <person name="van Kessel K.P."/>
            <person name="van Strijp J.A."/>
            <person name="de Haas C.J."/>
        </authorList>
    </citation>
    <scope>FUNCTION</scope>
    <scope>INTERACTION WITH HOST SELPLG</scope>
    <source>
        <strain>NCTC 8325 / PS 47</strain>
    </source>
</reference>
<reference key="3">
    <citation type="journal article" date="2010" name="Infect. Immun.">
        <title>Staphylococcal superantigen-like protein 5 inhibits matrix metalloproteinase 9 from human neutrophils.</title>
        <authorList>
            <person name="Itoh S."/>
            <person name="Hamada E."/>
            <person name="Kamoshida G."/>
            <person name="Takeshita K."/>
            <person name="Oku T."/>
            <person name="Tsuji T."/>
        </authorList>
    </citation>
    <scope>FUNCTION</scope>
    <scope>INTERACTION WITH HOST MMP9</scope>
    <source>
        <strain>ATCC 27733</strain>
    </source>
</reference>
<reference key="4">
    <citation type="journal article" date="2011" name="PLoS ONE">
        <title>GPVI and GPIbalpha mediate staphylococcal superantigen-like protein 5 (SSL5) induced platelet activation and direct toward glycans as potential inhibitors.</title>
        <authorList>
            <person name="Hu H."/>
            <person name="Armstrong P.C."/>
            <person name="Khalil E."/>
            <person name="Chen Y.C."/>
            <person name="Straub A."/>
            <person name="Li M."/>
            <person name="Soosairajah J."/>
            <person name="Hagemeyer C.E."/>
            <person name="Bassler N."/>
            <person name="Huang D."/>
            <person name="Ahrens I."/>
            <person name="Krippner G."/>
            <person name="Gardiner E."/>
            <person name="Peter K."/>
        </authorList>
    </citation>
    <scope>FUNCTION</scope>
    <scope>INTERACTION WITH HOST GP1BA AND GP6</scope>
    <scope>MUTAGENESIS OF THR-205</scope>
    <source>
        <strain>NCTC 8325 / PS 47</strain>
    </source>
</reference>
<reference key="5">
    <citation type="journal article" date="2018" name="Biochem. Biophys. Res. Commun.">
        <title>Identification of matrix metalloproteinase 9-interacting sequences in staphylococcal superantigen-like protein 5.</title>
        <authorList>
            <person name="Kohno K."/>
            <person name="Itoh S."/>
            <person name="Hanai A."/>
            <person name="Takii T."/>
            <person name="Fujiwara T."/>
            <person name="Onozaki K."/>
            <person name="Tsuji T."/>
            <person name="Hida S."/>
        </authorList>
    </citation>
    <scope>FUNCTION</scope>
    <scope>INTERACTION WITH HOST MMP9</scope>
</reference>
<reference key="6">
    <citation type="journal article" date="2018" name="Microbiol. Immunol.">
        <title>Role of sialic acid-containing glycans of matrix metalloproteinase-9 (MMP-9) in the interaction between MMP-9 and staphylococcal superantigen-like protein 5.</title>
        <authorList>
            <person name="Kurisaka C."/>
            <person name="Oku T."/>
            <person name="Itoh S."/>
            <person name="Tsuji T."/>
        </authorList>
    </citation>
    <scope>INTERACTION WITH HOST MMP9</scope>
</reference>
<comment type="function">
    <text evidence="2 3 4 5 6">Secreted protein that plays a role in the inhibition of host innate immune system. Modulates the interaction between host SELPLG and P-selectin thereby preventing initial rolling of neutrophils toward the site of infection (PubMed:17132726). Interferes with leukocyte trafficking by inhibiting host metalloproteinase-9/MMP9 activity (PubMed:20479083, PubMed:29328525, PubMed:29462623). Also associates with two different platelet surface receptors GP1A and GP6 leading to platelet activation and aggregation (PubMed:21552524).</text>
</comment>
<comment type="subunit">
    <text evidence="2 4">Interacts with host SELPLG; this interaction prevents SELPLG-mediated neutrophil rolling (PubMed:17132726). Interacts with host MMP9 (via sialic acid-containing O-glycans); this interaction inhibits MMP9 activity. Interacts with host GP1BA and GP6; these interactions play an important role in platelet binding and activation (PubMed:21552524).</text>
</comment>
<comment type="similarity">
    <text evidence="8">Belongs to the staphylococcal/streptococcal toxin family.</text>
</comment>